<organism>
    <name type="scientific">Cereibacter sphaeroides (strain ATCC 17025 / ATH 2.4.3)</name>
    <name type="common">Rhodobacter sphaeroides</name>
    <dbReference type="NCBI Taxonomy" id="349102"/>
    <lineage>
        <taxon>Bacteria</taxon>
        <taxon>Pseudomonadati</taxon>
        <taxon>Pseudomonadota</taxon>
        <taxon>Alphaproteobacteria</taxon>
        <taxon>Rhodobacterales</taxon>
        <taxon>Paracoccaceae</taxon>
        <taxon>Cereibacter</taxon>
    </lineage>
</organism>
<feature type="chain" id="PRO_1000084657" description="tRNA pseudouridine synthase B">
    <location>
        <begin position="1"/>
        <end position="301"/>
    </location>
</feature>
<feature type="active site" description="Nucleophile" evidence="1">
    <location>
        <position position="47"/>
    </location>
</feature>
<sequence>MGRTRKGRAISGWLVVDKPAGMTSTAVVNKVRWALGAQKAGHAGTLDPDATGVLAVALGEATKTVPYITDALKCYRFMVRLGVGTRTDDASGEVIATSEARPEDPEIEAALAAFRGEIMQVPPQFSAVKVEGERAYDLAREGERLDLAARPLWVESLELISRPDADHVELEMVCGKGGYVRSIARDLGQALGCHGHVEWLRRTWSGPFEAEDGISVATIDELAKSEELLAHVMPLACGLADLPELPATAEGAARLKCGNPGMVIASDVEFGEEAWASFQGQPVAVGIYKAGELHPTRVFNL</sequence>
<keyword id="KW-0413">Isomerase</keyword>
<keyword id="KW-0819">tRNA processing</keyword>
<gene>
    <name evidence="1" type="primary">truB</name>
    <name type="ordered locus">Rsph17025_2922</name>
</gene>
<name>TRUB_CERS5</name>
<reference key="1">
    <citation type="submission" date="2007-04" db="EMBL/GenBank/DDBJ databases">
        <title>Complete sequence of chromosome of Rhodobacter sphaeroides ATCC 17025.</title>
        <authorList>
            <consortium name="US DOE Joint Genome Institute"/>
            <person name="Copeland A."/>
            <person name="Lucas S."/>
            <person name="Lapidus A."/>
            <person name="Barry K."/>
            <person name="Detter J.C."/>
            <person name="Glavina del Rio T."/>
            <person name="Hammon N."/>
            <person name="Israni S."/>
            <person name="Dalin E."/>
            <person name="Tice H."/>
            <person name="Pitluck S."/>
            <person name="Chertkov O."/>
            <person name="Brettin T."/>
            <person name="Bruce D."/>
            <person name="Han C."/>
            <person name="Schmutz J."/>
            <person name="Larimer F."/>
            <person name="Land M."/>
            <person name="Hauser L."/>
            <person name="Kyrpides N."/>
            <person name="Kim E."/>
            <person name="Richardson P."/>
            <person name="Mackenzie C."/>
            <person name="Choudhary M."/>
            <person name="Donohue T.J."/>
            <person name="Kaplan S."/>
        </authorList>
    </citation>
    <scope>NUCLEOTIDE SEQUENCE [LARGE SCALE GENOMIC DNA]</scope>
    <source>
        <strain>ATCC 17025 / ATH 2.4.3</strain>
    </source>
</reference>
<comment type="function">
    <text evidence="1">Responsible for synthesis of pseudouridine from uracil-55 in the psi GC loop of transfer RNAs.</text>
</comment>
<comment type="catalytic activity">
    <reaction evidence="1">
        <text>uridine(55) in tRNA = pseudouridine(55) in tRNA</text>
        <dbReference type="Rhea" id="RHEA:42532"/>
        <dbReference type="Rhea" id="RHEA-COMP:10101"/>
        <dbReference type="Rhea" id="RHEA-COMP:10102"/>
        <dbReference type="ChEBI" id="CHEBI:65314"/>
        <dbReference type="ChEBI" id="CHEBI:65315"/>
        <dbReference type="EC" id="5.4.99.25"/>
    </reaction>
</comment>
<comment type="similarity">
    <text evidence="1">Belongs to the pseudouridine synthase TruB family. Type 1 subfamily.</text>
</comment>
<accession>A4WWP4</accession>
<dbReference type="EC" id="5.4.99.25" evidence="1"/>
<dbReference type="EMBL" id="CP000661">
    <property type="protein sequence ID" value="ABP71808.1"/>
    <property type="molecule type" value="Genomic_DNA"/>
</dbReference>
<dbReference type="SMR" id="A4WWP4"/>
<dbReference type="STRING" id="349102.Rsph17025_2922"/>
<dbReference type="KEGG" id="rsq:Rsph17025_2922"/>
<dbReference type="eggNOG" id="COG0130">
    <property type="taxonomic scope" value="Bacteria"/>
</dbReference>
<dbReference type="HOGENOM" id="CLU_032087_0_3_5"/>
<dbReference type="BioCyc" id="RSPH349102:G1G8M-3018-MONOMER"/>
<dbReference type="GO" id="GO:0003723">
    <property type="term" value="F:RNA binding"/>
    <property type="evidence" value="ECO:0007669"/>
    <property type="project" value="InterPro"/>
</dbReference>
<dbReference type="GO" id="GO:0160148">
    <property type="term" value="F:tRNA pseudouridine(55) synthase activity"/>
    <property type="evidence" value="ECO:0007669"/>
    <property type="project" value="UniProtKB-EC"/>
</dbReference>
<dbReference type="GO" id="GO:1990481">
    <property type="term" value="P:mRNA pseudouridine synthesis"/>
    <property type="evidence" value="ECO:0007669"/>
    <property type="project" value="TreeGrafter"/>
</dbReference>
<dbReference type="GO" id="GO:0031119">
    <property type="term" value="P:tRNA pseudouridine synthesis"/>
    <property type="evidence" value="ECO:0007669"/>
    <property type="project" value="UniProtKB-UniRule"/>
</dbReference>
<dbReference type="CDD" id="cd02573">
    <property type="entry name" value="PseudoU_synth_EcTruB"/>
    <property type="match status" value="1"/>
</dbReference>
<dbReference type="Gene3D" id="3.30.2350.10">
    <property type="entry name" value="Pseudouridine synthase"/>
    <property type="match status" value="1"/>
</dbReference>
<dbReference type="HAMAP" id="MF_01080">
    <property type="entry name" value="TruB_bact"/>
    <property type="match status" value="1"/>
</dbReference>
<dbReference type="InterPro" id="IPR020103">
    <property type="entry name" value="PsdUridine_synth_cat_dom_sf"/>
</dbReference>
<dbReference type="InterPro" id="IPR002501">
    <property type="entry name" value="PsdUridine_synth_N"/>
</dbReference>
<dbReference type="InterPro" id="IPR014780">
    <property type="entry name" value="tRNA_psdUridine_synth_TruB"/>
</dbReference>
<dbReference type="InterPro" id="IPR032819">
    <property type="entry name" value="TruB_C"/>
</dbReference>
<dbReference type="NCBIfam" id="TIGR00431">
    <property type="entry name" value="TruB"/>
    <property type="match status" value="1"/>
</dbReference>
<dbReference type="PANTHER" id="PTHR13767:SF2">
    <property type="entry name" value="PSEUDOURIDYLATE SYNTHASE TRUB1"/>
    <property type="match status" value="1"/>
</dbReference>
<dbReference type="PANTHER" id="PTHR13767">
    <property type="entry name" value="TRNA-PSEUDOURIDINE SYNTHASE"/>
    <property type="match status" value="1"/>
</dbReference>
<dbReference type="Pfam" id="PF16198">
    <property type="entry name" value="TruB_C_2"/>
    <property type="match status" value="1"/>
</dbReference>
<dbReference type="Pfam" id="PF01509">
    <property type="entry name" value="TruB_N"/>
    <property type="match status" value="1"/>
</dbReference>
<dbReference type="SUPFAM" id="SSF55120">
    <property type="entry name" value="Pseudouridine synthase"/>
    <property type="match status" value="1"/>
</dbReference>
<evidence type="ECO:0000255" key="1">
    <source>
        <dbReference type="HAMAP-Rule" id="MF_01080"/>
    </source>
</evidence>
<protein>
    <recommendedName>
        <fullName evidence="1">tRNA pseudouridine synthase B</fullName>
        <ecNumber evidence="1">5.4.99.25</ecNumber>
    </recommendedName>
    <alternativeName>
        <fullName evidence="1">tRNA pseudouridine(55) synthase</fullName>
        <shortName evidence="1">Psi55 synthase</shortName>
    </alternativeName>
    <alternativeName>
        <fullName evidence="1">tRNA pseudouridylate synthase</fullName>
    </alternativeName>
    <alternativeName>
        <fullName evidence="1">tRNA-uridine isomerase</fullName>
    </alternativeName>
</protein>
<proteinExistence type="inferred from homology"/>